<comment type="function">
    <text evidence="1">Involved in peptide bond synthesis. Stimulates efficient translation and peptide-bond synthesis on native or reconstituted 70S ribosomes in vitro. Probably functions indirectly by altering the affinity of the ribosome for aminoacyl-tRNA, thus increasing their reactivity as acceptors for peptidyl transferase.</text>
</comment>
<comment type="pathway">
    <text evidence="1">Protein biosynthesis; polypeptide chain elongation.</text>
</comment>
<comment type="subcellular location">
    <subcellularLocation>
        <location evidence="1">Cytoplasm</location>
    </subcellularLocation>
</comment>
<comment type="similarity">
    <text evidence="1">Belongs to the elongation factor P family.</text>
</comment>
<gene>
    <name evidence="1" type="primary">efp</name>
    <name type="ordered locus">OB1895</name>
</gene>
<accession>Q8EQ28</accession>
<sequence>MISVNDFKTGLTVEVDNDIWQVIEFQHVKPGKGAAFVRSKLRNLRSGNIQEKTFRAGEKVSKAHIENRKMQYLYASGDAHAFMDTNTYDQIEIQGKQIQEQLKFIKENMEVSIVSYENEILGVDLPNNVELTVTETEPGIKGDTASGGSKPATLETGLIVQVPFFINEGDVLVINTSDGKYVSRA</sequence>
<feature type="chain" id="PRO_0000094298" description="Elongation factor P">
    <location>
        <begin position="1"/>
        <end position="185"/>
    </location>
</feature>
<evidence type="ECO:0000255" key="1">
    <source>
        <dbReference type="HAMAP-Rule" id="MF_00141"/>
    </source>
</evidence>
<proteinExistence type="inferred from homology"/>
<keyword id="KW-0963">Cytoplasm</keyword>
<keyword id="KW-0251">Elongation factor</keyword>
<keyword id="KW-0648">Protein biosynthesis</keyword>
<keyword id="KW-1185">Reference proteome</keyword>
<organism>
    <name type="scientific">Oceanobacillus iheyensis (strain DSM 14371 / CIP 107618 / JCM 11309 / KCTC 3954 / HTE831)</name>
    <dbReference type="NCBI Taxonomy" id="221109"/>
    <lineage>
        <taxon>Bacteria</taxon>
        <taxon>Bacillati</taxon>
        <taxon>Bacillota</taxon>
        <taxon>Bacilli</taxon>
        <taxon>Bacillales</taxon>
        <taxon>Bacillaceae</taxon>
        <taxon>Oceanobacillus</taxon>
    </lineage>
</organism>
<name>EFP_OCEIH</name>
<dbReference type="EMBL" id="BA000028">
    <property type="protein sequence ID" value="BAC13851.1"/>
    <property type="molecule type" value="Genomic_DNA"/>
</dbReference>
<dbReference type="RefSeq" id="WP_011066292.1">
    <property type="nucleotide sequence ID" value="NC_004193.1"/>
</dbReference>
<dbReference type="SMR" id="Q8EQ28"/>
<dbReference type="STRING" id="221109.gene:10734135"/>
<dbReference type="KEGG" id="oih:OB1895"/>
<dbReference type="eggNOG" id="COG0231">
    <property type="taxonomic scope" value="Bacteria"/>
</dbReference>
<dbReference type="HOGENOM" id="CLU_074944_0_1_9"/>
<dbReference type="OrthoDB" id="9801844at2"/>
<dbReference type="PhylomeDB" id="Q8EQ28"/>
<dbReference type="UniPathway" id="UPA00345"/>
<dbReference type="Proteomes" id="UP000000822">
    <property type="component" value="Chromosome"/>
</dbReference>
<dbReference type="GO" id="GO:0005737">
    <property type="term" value="C:cytoplasm"/>
    <property type="evidence" value="ECO:0007669"/>
    <property type="project" value="UniProtKB-SubCell"/>
</dbReference>
<dbReference type="GO" id="GO:0003746">
    <property type="term" value="F:translation elongation factor activity"/>
    <property type="evidence" value="ECO:0007669"/>
    <property type="project" value="UniProtKB-UniRule"/>
</dbReference>
<dbReference type="GO" id="GO:0043043">
    <property type="term" value="P:peptide biosynthetic process"/>
    <property type="evidence" value="ECO:0007669"/>
    <property type="project" value="InterPro"/>
</dbReference>
<dbReference type="CDD" id="cd04470">
    <property type="entry name" value="S1_EF-P_repeat_1"/>
    <property type="match status" value="1"/>
</dbReference>
<dbReference type="CDD" id="cd05794">
    <property type="entry name" value="S1_EF-P_repeat_2"/>
    <property type="match status" value="1"/>
</dbReference>
<dbReference type="FunFam" id="2.30.30.30:FF:000003">
    <property type="entry name" value="Elongation factor P"/>
    <property type="match status" value="1"/>
</dbReference>
<dbReference type="FunFam" id="2.40.50.140:FF:000004">
    <property type="entry name" value="Elongation factor P"/>
    <property type="match status" value="1"/>
</dbReference>
<dbReference type="FunFam" id="2.40.50.140:FF:000009">
    <property type="entry name" value="Elongation factor P"/>
    <property type="match status" value="1"/>
</dbReference>
<dbReference type="Gene3D" id="2.30.30.30">
    <property type="match status" value="1"/>
</dbReference>
<dbReference type="Gene3D" id="2.40.50.140">
    <property type="entry name" value="Nucleic acid-binding proteins"/>
    <property type="match status" value="2"/>
</dbReference>
<dbReference type="HAMAP" id="MF_00141">
    <property type="entry name" value="EF_P"/>
    <property type="match status" value="1"/>
</dbReference>
<dbReference type="InterPro" id="IPR015365">
    <property type="entry name" value="Elong-fact-P_C"/>
</dbReference>
<dbReference type="InterPro" id="IPR012340">
    <property type="entry name" value="NA-bd_OB-fold"/>
</dbReference>
<dbReference type="InterPro" id="IPR014722">
    <property type="entry name" value="Rib_uL2_dom2"/>
</dbReference>
<dbReference type="InterPro" id="IPR020599">
    <property type="entry name" value="Transl_elong_fac_P/YeiP"/>
</dbReference>
<dbReference type="InterPro" id="IPR013185">
    <property type="entry name" value="Transl_elong_KOW-like"/>
</dbReference>
<dbReference type="InterPro" id="IPR001059">
    <property type="entry name" value="Transl_elong_P/YeiP_cen"/>
</dbReference>
<dbReference type="InterPro" id="IPR013852">
    <property type="entry name" value="Transl_elong_P/YeiP_CS"/>
</dbReference>
<dbReference type="InterPro" id="IPR011768">
    <property type="entry name" value="Transl_elongation_fac_P"/>
</dbReference>
<dbReference type="InterPro" id="IPR008991">
    <property type="entry name" value="Translation_prot_SH3-like_sf"/>
</dbReference>
<dbReference type="NCBIfam" id="TIGR00038">
    <property type="entry name" value="efp"/>
    <property type="match status" value="1"/>
</dbReference>
<dbReference type="NCBIfam" id="NF001810">
    <property type="entry name" value="PRK00529.1"/>
    <property type="match status" value="1"/>
</dbReference>
<dbReference type="PANTHER" id="PTHR30053">
    <property type="entry name" value="ELONGATION FACTOR P"/>
    <property type="match status" value="1"/>
</dbReference>
<dbReference type="PANTHER" id="PTHR30053:SF12">
    <property type="entry name" value="ELONGATION FACTOR P (EF-P) FAMILY PROTEIN"/>
    <property type="match status" value="1"/>
</dbReference>
<dbReference type="Pfam" id="PF01132">
    <property type="entry name" value="EFP"/>
    <property type="match status" value="1"/>
</dbReference>
<dbReference type="Pfam" id="PF08207">
    <property type="entry name" value="EFP_N"/>
    <property type="match status" value="1"/>
</dbReference>
<dbReference type="Pfam" id="PF09285">
    <property type="entry name" value="Elong-fact-P_C"/>
    <property type="match status" value="1"/>
</dbReference>
<dbReference type="PIRSF" id="PIRSF005901">
    <property type="entry name" value="EF-P"/>
    <property type="match status" value="1"/>
</dbReference>
<dbReference type="SMART" id="SM01185">
    <property type="entry name" value="EFP"/>
    <property type="match status" value="1"/>
</dbReference>
<dbReference type="SMART" id="SM00841">
    <property type="entry name" value="Elong-fact-P_C"/>
    <property type="match status" value="1"/>
</dbReference>
<dbReference type="SUPFAM" id="SSF50249">
    <property type="entry name" value="Nucleic acid-binding proteins"/>
    <property type="match status" value="2"/>
</dbReference>
<dbReference type="SUPFAM" id="SSF50104">
    <property type="entry name" value="Translation proteins SH3-like domain"/>
    <property type="match status" value="1"/>
</dbReference>
<dbReference type="PROSITE" id="PS01275">
    <property type="entry name" value="EFP"/>
    <property type="match status" value="1"/>
</dbReference>
<reference key="1">
    <citation type="journal article" date="2002" name="Nucleic Acids Res.">
        <title>Genome sequence of Oceanobacillus iheyensis isolated from the Iheya Ridge and its unexpected adaptive capabilities to extreme environments.</title>
        <authorList>
            <person name="Takami H."/>
            <person name="Takaki Y."/>
            <person name="Uchiyama I."/>
        </authorList>
    </citation>
    <scope>NUCLEOTIDE SEQUENCE [LARGE SCALE GENOMIC DNA]</scope>
    <source>
        <strain>DSM 14371 / CIP 107618 / JCM 11309 / KCTC 3954 / HTE831</strain>
    </source>
</reference>
<protein>
    <recommendedName>
        <fullName evidence="1">Elongation factor P</fullName>
        <shortName evidence="1">EF-P</shortName>
    </recommendedName>
</protein>